<sequence length="438" mass="49761">MQTQEEASNPLERNIELSVSREKVEAEVGQRLKRLAPKIKIQGFRPGKVPMKIVAQQYGHQIEHEVLGELLQQQFSESINRENYRIAGVPNFESRNPGTDNSNYEFRATFEIYPNIELGDLNSITINKPVLQIGDVEIQKTLEVLRKQRTNYESVDRPAQTGDRVNINYQGSLDGKNFAGGQADNYSVILGNGHLLEDFEASILGMSTGQEKTFDMTFPEDYSGKEVAGKKVTFTITLNKVEAPKLPDVDGEFAKSLGIEDGNVEKMQSEIKANLQRETTQRIRVKLKEQVMQSLLDKISVDIPKILVQQEIDRLIEEVQDTRTARGFPKASNLQRDTFLERAERRVRLGLILSRLIETHGLGVKPEQIKSFIEEHAQSYENPEQVIKWHFASPERIKEIEPLVLEDNAVSWILDRANIVDQNVTFDELMGYSHAANT</sequence>
<comment type="function">
    <text evidence="1">Involved in protein export. Acts as a chaperone by maintaining the newly synthesized protein in an open conformation. Functions as a peptidyl-prolyl cis-trans isomerase.</text>
</comment>
<comment type="catalytic activity">
    <reaction evidence="1">
        <text>[protein]-peptidylproline (omega=180) = [protein]-peptidylproline (omega=0)</text>
        <dbReference type="Rhea" id="RHEA:16237"/>
        <dbReference type="Rhea" id="RHEA-COMP:10747"/>
        <dbReference type="Rhea" id="RHEA-COMP:10748"/>
        <dbReference type="ChEBI" id="CHEBI:83833"/>
        <dbReference type="ChEBI" id="CHEBI:83834"/>
        <dbReference type="EC" id="5.2.1.8"/>
    </reaction>
</comment>
<comment type="subcellular location">
    <subcellularLocation>
        <location>Cytoplasm</location>
    </subcellularLocation>
    <text evidence="1">About half TF is bound to the ribosome near the polypeptide exit tunnel while the other half is free in the cytoplasm.</text>
</comment>
<comment type="domain">
    <text evidence="1">Consists of 3 domains; the N-terminus binds the ribosome, the middle domain has PPIase activity, while the C-terminus has intrinsic chaperone activity on its own.</text>
</comment>
<comment type="similarity">
    <text evidence="1">Belongs to the FKBP-type PPIase family. Tig subfamily.</text>
</comment>
<keyword id="KW-0131">Cell cycle</keyword>
<keyword id="KW-0132">Cell division</keyword>
<keyword id="KW-0143">Chaperone</keyword>
<keyword id="KW-0963">Cytoplasm</keyword>
<keyword id="KW-0413">Isomerase</keyword>
<keyword id="KW-0697">Rotamase</keyword>
<organism>
    <name type="scientific">Nitrosomonas eutropha (strain DSM 101675 / C91 / Nm57)</name>
    <dbReference type="NCBI Taxonomy" id="335283"/>
    <lineage>
        <taxon>Bacteria</taxon>
        <taxon>Pseudomonadati</taxon>
        <taxon>Pseudomonadota</taxon>
        <taxon>Betaproteobacteria</taxon>
        <taxon>Nitrosomonadales</taxon>
        <taxon>Nitrosomonadaceae</taxon>
        <taxon>Nitrosomonas</taxon>
    </lineage>
</organism>
<protein>
    <recommendedName>
        <fullName evidence="1">Trigger factor</fullName>
        <shortName evidence="1">TF</shortName>
        <ecNumber evidence="1">5.2.1.8</ecNumber>
    </recommendedName>
    <alternativeName>
        <fullName evidence="1">PPIase</fullName>
    </alternativeName>
</protein>
<accession>Q0AJI1</accession>
<gene>
    <name evidence="1" type="primary">tig</name>
    <name type="ordered locus">Neut_0204</name>
</gene>
<name>TIG_NITEC</name>
<evidence type="ECO:0000255" key="1">
    <source>
        <dbReference type="HAMAP-Rule" id="MF_00303"/>
    </source>
</evidence>
<reference key="1">
    <citation type="journal article" date="2007" name="Environ. Microbiol.">
        <title>Whole-genome analysis of the ammonia-oxidizing bacterium, Nitrosomonas eutropha C91: implications for niche adaptation.</title>
        <authorList>
            <person name="Stein L.Y."/>
            <person name="Arp D.J."/>
            <person name="Berube P.M."/>
            <person name="Chain P.S."/>
            <person name="Hauser L."/>
            <person name="Jetten M.S."/>
            <person name="Klotz M.G."/>
            <person name="Larimer F.W."/>
            <person name="Norton J.M."/>
            <person name="Op den Camp H.J.M."/>
            <person name="Shin M."/>
            <person name="Wei X."/>
        </authorList>
    </citation>
    <scope>NUCLEOTIDE SEQUENCE [LARGE SCALE GENOMIC DNA]</scope>
    <source>
        <strain>DSM 101675 / C91 / Nm57</strain>
    </source>
</reference>
<proteinExistence type="inferred from homology"/>
<feature type="chain" id="PRO_1000022719" description="Trigger factor">
    <location>
        <begin position="1"/>
        <end position="438"/>
    </location>
</feature>
<feature type="domain" description="PPIase FKBP-type" evidence="1">
    <location>
        <begin position="162"/>
        <end position="247"/>
    </location>
</feature>
<dbReference type="EC" id="5.2.1.8" evidence="1"/>
<dbReference type="EMBL" id="CP000450">
    <property type="protein sequence ID" value="ABI58490.1"/>
    <property type="molecule type" value="Genomic_DNA"/>
</dbReference>
<dbReference type="RefSeq" id="WP_011633335.1">
    <property type="nucleotide sequence ID" value="NC_008344.1"/>
</dbReference>
<dbReference type="SMR" id="Q0AJI1"/>
<dbReference type="STRING" id="335283.Neut_0204"/>
<dbReference type="KEGG" id="net:Neut_0204"/>
<dbReference type="eggNOG" id="COG0544">
    <property type="taxonomic scope" value="Bacteria"/>
</dbReference>
<dbReference type="HOGENOM" id="CLU_033058_2_0_4"/>
<dbReference type="OrthoDB" id="9767721at2"/>
<dbReference type="Proteomes" id="UP000001966">
    <property type="component" value="Chromosome"/>
</dbReference>
<dbReference type="GO" id="GO:0005737">
    <property type="term" value="C:cytoplasm"/>
    <property type="evidence" value="ECO:0007669"/>
    <property type="project" value="UniProtKB-SubCell"/>
</dbReference>
<dbReference type="GO" id="GO:0003755">
    <property type="term" value="F:peptidyl-prolyl cis-trans isomerase activity"/>
    <property type="evidence" value="ECO:0007669"/>
    <property type="project" value="UniProtKB-UniRule"/>
</dbReference>
<dbReference type="GO" id="GO:0044183">
    <property type="term" value="F:protein folding chaperone"/>
    <property type="evidence" value="ECO:0007669"/>
    <property type="project" value="TreeGrafter"/>
</dbReference>
<dbReference type="GO" id="GO:0043022">
    <property type="term" value="F:ribosome binding"/>
    <property type="evidence" value="ECO:0007669"/>
    <property type="project" value="TreeGrafter"/>
</dbReference>
<dbReference type="GO" id="GO:0051083">
    <property type="term" value="P:'de novo' cotranslational protein folding"/>
    <property type="evidence" value="ECO:0007669"/>
    <property type="project" value="TreeGrafter"/>
</dbReference>
<dbReference type="GO" id="GO:0051301">
    <property type="term" value="P:cell division"/>
    <property type="evidence" value="ECO:0007669"/>
    <property type="project" value="UniProtKB-KW"/>
</dbReference>
<dbReference type="GO" id="GO:0061077">
    <property type="term" value="P:chaperone-mediated protein folding"/>
    <property type="evidence" value="ECO:0007669"/>
    <property type="project" value="TreeGrafter"/>
</dbReference>
<dbReference type="GO" id="GO:0015031">
    <property type="term" value="P:protein transport"/>
    <property type="evidence" value="ECO:0007669"/>
    <property type="project" value="UniProtKB-UniRule"/>
</dbReference>
<dbReference type="GO" id="GO:0043335">
    <property type="term" value="P:protein unfolding"/>
    <property type="evidence" value="ECO:0007669"/>
    <property type="project" value="TreeGrafter"/>
</dbReference>
<dbReference type="FunFam" id="3.10.50.40:FF:000001">
    <property type="entry name" value="Trigger factor"/>
    <property type="match status" value="1"/>
</dbReference>
<dbReference type="Gene3D" id="3.10.50.40">
    <property type="match status" value="1"/>
</dbReference>
<dbReference type="Gene3D" id="3.30.70.1050">
    <property type="entry name" value="Trigger factor ribosome-binding domain"/>
    <property type="match status" value="1"/>
</dbReference>
<dbReference type="Gene3D" id="1.10.3120.10">
    <property type="entry name" value="Trigger factor, C-terminal domain"/>
    <property type="match status" value="1"/>
</dbReference>
<dbReference type="HAMAP" id="MF_00303">
    <property type="entry name" value="Trigger_factor_Tig"/>
    <property type="match status" value="1"/>
</dbReference>
<dbReference type="InterPro" id="IPR046357">
    <property type="entry name" value="PPIase_dom_sf"/>
</dbReference>
<dbReference type="InterPro" id="IPR001179">
    <property type="entry name" value="PPIase_FKBP_dom"/>
</dbReference>
<dbReference type="InterPro" id="IPR005215">
    <property type="entry name" value="Trig_fac"/>
</dbReference>
<dbReference type="InterPro" id="IPR008880">
    <property type="entry name" value="Trigger_fac_C"/>
</dbReference>
<dbReference type="InterPro" id="IPR037041">
    <property type="entry name" value="Trigger_fac_C_sf"/>
</dbReference>
<dbReference type="InterPro" id="IPR008881">
    <property type="entry name" value="Trigger_fac_ribosome-bd_bac"/>
</dbReference>
<dbReference type="InterPro" id="IPR036611">
    <property type="entry name" value="Trigger_fac_ribosome-bd_sf"/>
</dbReference>
<dbReference type="InterPro" id="IPR027304">
    <property type="entry name" value="Trigger_fact/SurA_dom_sf"/>
</dbReference>
<dbReference type="NCBIfam" id="TIGR00115">
    <property type="entry name" value="tig"/>
    <property type="match status" value="1"/>
</dbReference>
<dbReference type="PANTHER" id="PTHR30560">
    <property type="entry name" value="TRIGGER FACTOR CHAPERONE AND PEPTIDYL-PROLYL CIS/TRANS ISOMERASE"/>
    <property type="match status" value="1"/>
</dbReference>
<dbReference type="PANTHER" id="PTHR30560:SF3">
    <property type="entry name" value="TRIGGER FACTOR-LIKE PROTEIN TIG, CHLOROPLASTIC"/>
    <property type="match status" value="1"/>
</dbReference>
<dbReference type="Pfam" id="PF00254">
    <property type="entry name" value="FKBP_C"/>
    <property type="match status" value="1"/>
</dbReference>
<dbReference type="Pfam" id="PF05698">
    <property type="entry name" value="Trigger_C"/>
    <property type="match status" value="1"/>
</dbReference>
<dbReference type="Pfam" id="PF05697">
    <property type="entry name" value="Trigger_N"/>
    <property type="match status" value="1"/>
</dbReference>
<dbReference type="PIRSF" id="PIRSF003095">
    <property type="entry name" value="Trigger_factor"/>
    <property type="match status" value="1"/>
</dbReference>
<dbReference type="SUPFAM" id="SSF54534">
    <property type="entry name" value="FKBP-like"/>
    <property type="match status" value="1"/>
</dbReference>
<dbReference type="SUPFAM" id="SSF109998">
    <property type="entry name" value="Triger factor/SurA peptide-binding domain-like"/>
    <property type="match status" value="1"/>
</dbReference>
<dbReference type="SUPFAM" id="SSF102735">
    <property type="entry name" value="Trigger factor ribosome-binding domain"/>
    <property type="match status" value="1"/>
</dbReference>
<dbReference type="PROSITE" id="PS50059">
    <property type="entry name" value="FKBP_PPIASE"/>
    <property type="match status" value="1"/>
</dbReference>